<reference key="1">
    <citation type="journal article" date="2001" name="Chem. Senses">
        <title>New GPCRs from a human lingual cDNA library.</title>
        <authorList>
            <person name="Gaudin J.-C."/>
            <person name="Breuils L."/>
            <person name="Haertle T."/>
        </authorList>
    </citation>
    <scope>NUCLEOTIDE SEQUENCE [MRNA]</scope>
    <source>
        <tissue>Tongue</tissue>
    </source>
</reference>
<reference key="2">
    <citation type="submission" date="2001-07" db="EMBL/GenBank/DDBJ databases">
        <title>Genome-wide discovery and analysis of human seven transmembrane helix receptor genes.</title>
        <authorList>
            <person name="Suwa M."/>
            <person name="Sato T."/>
            <person name="Okouchi I."/>
            <person name="Arita M."/>
            <person name="Futami K."/>
            <person name="Matsumoto S."/>
            <person name="Tsutsumi S."/>
            <person name="Aburatani H."/>
            <person name="Asai K."/>
            <person name="Akiyama Y."/>
        </authorList>
    </citation>
    <scope>NUCLEOTIDE SEQUENCE [GENOMIC DNA]</scope>
</reference>
<reference key="3">
    <citation type="journal article" date="2004" name="Genome Res.">
        <title>The status, quality, and expansion of the NIH full-length cDNA project: the Mammalian Gene Collection (MGC).</title>
        <authorList>
            <consortium name="The MGC Project Team"/>
        </authorList>
    </citation>
    <scope>NUCLEOTIDE SEQUENCE [LARGE SCALE MRNA]</scope>
</reference>
<gene>
    <name type="primary">OR5P2</name>
</gene>
<keyword id="KW-1003">Cell membrane</keyword>
<keyword id="KW-1015">Disulfide bond</keyword>
<keyword id="KW-0297">G-protein coupled receptor</keyword>
<keyword id="KW-0325">Glycoprotein</keyword>
<keyword id="KW-0472">Membrane</keyword>
<keyword id="KW-0552">Olfaction</keyword>
<keyword id="KW-0675">Receptor</keyword>
<keyword id="KW-1185">Reference proteome</keyword>
<keyword id="KW-0716">Sensory transduction</keyword>
<keyword id="KW-0807">Transducer</keyword>
<keyword id="KW-0812">Transmembrane</keyword>
<keyword id="KW-1133">Transmembrane helix</keyword>
<accession>Q8WZ92</accession>
<accession>Q3MIS8</accession>
<dbReference type="EMBL" id="AF173006">
    <property type="protein sequence ID" value="AAL32992.1"/>
    <property type="molecule type" value="mRNA"/>
</dbReference>
<dbReference type="EMBL" id="AB065767">
    <property type="protein sequence ID" value="BAC05987.1"/>
    <property type="molecule type" value="Genomic_DNA"/>
</dbReference>
<dbReference type="EMBL" id="BC101710">
    <property type="protein sequence ID" value="AAI01711.1"/>
    <property type="molecule type" value="mRNA"/>
</dbReference>
<dbReference type="EMBL" id="BC113557">
    <property type="protein sequence ID" value="AAI13558.1"/>
    <property type="molecule type" value="mRNA"/>
</dbReference>
<dbReference type="CCDS" id="CCDS7782.1"/>
<dbReference type="RefSeq" id="NP_703145.1">
    <property type="nucleotide sequence ID" value="NM_153444.1"/>
</dbReference>
<dbReference type="SMR" id="Q8WZ92"/>
<dbReference type="FunCoup" id="Q8WZ92">
    <property type="interactions" value="416"/>
</dbReference>
<dbReference type="STRING" id="9606.ENSP00000331823"/>
<dbReference type="GlyCosmos" id="Q8WZ92">
    <property type="glycosylation" value="2 sites, No reported glycans"/>
</dbReference>
<dbReference type="GlyGen" id="Q8WZ92">
    <property type="glycosylation" value="2 sites"/>
</dbReference>
<dbReference type="BioMuta" id="OR5P2"/>
<dbReference type="DMDM" id="20532190"/>
<dbReference type="jPOST" id="Q8WZ92"/>
<dbReference type="MassIVE" id="Q8WZ92"/>
<dbReference type="PaxDb" id="9606-ENSP00000331823"/>
<dbReference type="PeptideAtlas" id="Q8WZ92"/>
<dbReference type="Antibodypedia" id="57622">
    <property type="antibodies" value="48 antibodies from 14 providers"/>
</dbReference>
<dbReference type="DNASU" id="120065"/>
<dbReference type="Ensembl" id="ENST00000329434.3">
    <property type="protein sequence ID" value="ENSP00000331823.2"/>
    <property type="gene ID" value="ENSG00000183303.3"/>
</dbReference>
<dbReference type="Ensembl" id="ENST00000611603.2">
    <property type="protein sequence ID" value="ENSP00000480613.1"/>
    <property type="gene ID" value="ENSG00000276025.2"/>
</dbReference>
<dbReference type="Ensembl" id="ENST00000625920.1">
    <property type="protein sequence ID" value="ENSP00000486671.1"/>
    <property type="gene ID" value="ENSG00000280931.1"/>
</dbReference>
<dbReference type="GeneID" id="120065"/>
<dbReference type="KEGG" id="hsa:120065"/>
<dbReference type="MANE-Select" id="ENST00000329434.3">
    <property type="protein sequence ID" value="ENSP00000331823.2"/>
    <property type="RefSeq nucleotide sequence ID" value="NM_153444.1"/>
    <property type="RefSeq protein sequence ID" value="NP_703145.1"/>
</dbReference>
<dbReference type="UCSC" id="uc001mfp.2">
    <property type="organism name" value="human"/>
</dbReference>
<dbReference type="AGR" id="HGNC:14783"/>
<dbReference type="CTD" id="120065"/>
<dbReference type="GeneCards" id="OR5P2"/>
<dbReference type="HGNC" id="HGNC:14783">
    <property type="gene designation" value="OR5P2"/>
</dbReference>
<dbReference type="HPA" id="ENSG00000183303">
    <property type="expression patterns" value="Not detected"/>
</dbReference>
<dbReference type="neXtProt" id="NX_Q8WZ92"/>
<dbReference type="OpenTargets" id="ENSG00000183303"/>
<dbReference type="PharmGKB" id="PA32561"/>
<dbReference type="VEuPathDB" id="HostDB:ENSG00000183303"/>
<dbReference type="eggNOG" id="ENOG502SKA1">
    <property type="taxonomic scope" value="Eukaryota"/>
</dbReference>
<dbReference type="GeneTree" id="ENSGT01130000278279"/>
<dbReference type="HOGENOM" id="CLU_012526_1_0_1"/>
<dbReference type="InParanoid" id="Q8WZ92"/>
<dbReference type="OMA" id="LSHDACY"/>
<dbReference type="PAN-GO" id="Q8WZ92">
    <property type="GO annotations" value="2 GO annotations based on evolutionary models"/>
</dbReference>
<dbReference type="PhylomeDB" id="Q8WZ92"/>
<dbReference type="TreeFam" id="TF338848"/>
<dbReference type="PathwayCommons" id="Q8WZ92"/>
<dbReference type="Reactome" id="R-HSA-9752946">
    <property type="pathway name" value="Expression and translocation of olfactory receptors"/>
</dbReference>
<dbReference type="BioGRID-ORCS" id="120065">
    <property type="hits" value="9 hits in 712 CRISPR screens"/>
</dbReference>
<dbReference type="GeneWiki" id="OR5P2"/>
<dbReference type="GenomeRNAi" id="120065"/>
<dbReference type="Pharos" id="Q8WZ92">
    <property type="development level" value="Tdark"/>
</dbReference>
<dbReference type="PRO" id="PR:Q8WZ92"/>
<dbReference type="Proteomes" id="UP000005640">
    <property type="component" value="Chromosome 11"/>
</dbReference>
<dbReference type="RNAct" id="Q8WZ92">
    <property type="molecule type" value="protein"/>
</dbReference>
<dbReference type="Bgee" id="ENSG00000183303">
    <property type="expression patterns" value="Expressed in skin of abdomen and 6 other cell types or tissues"/>
</dbReference>
<dbReference type="ExpressionAtlas" id="Q8WZ92">
    <property type="expression patterns" value="baseline and differential"/>
</dbReference>
<dbReference type="GO" id="GO:0005886">
    <property type="term" value="C:plasma membrane"/>
    <property type="evidence" value="ECO:0007669"/>
    <property type="project" value="UniProtKB-SubCell"/>
</dbReference>
<dbReference type="GO" id="GO:0004930">
    <property type="term" value="F:G protein-coupled receptor activity"/>
    <property type="evidence" value="ECO:0007669"/>
    <property type="project" value="UniProtKB-KW"/>
</dbReference>
<dbReference type="GO" id="GO:0005549">
    <property type="term" value="F:odorant binding"/>
    <property type="evidence" value="ECO:0000318"/>
    <property type="project" value="GO_Central"/>
</dbReference>
<dbReference type="GO" id="GO:0004984">
    <property type="term" value="F:olfactory receptor activity"/>
    <property type="evidence" value="ECO:0000318"/>
    <property type="project" value="GO_Central"/>
</dbReference>
<dbReference type="CDD" id="cd15416">
    <property type="entry name" value="7tmA_OR5P-like"/>
    <property type="match status" value="1"/>
</dbReference>
<dbReference type="FunFam" id="1.20.1070.10:FF:000004">
    <property type="entry name" value="Olfactory receptor"/>
    <property type="match status" value="1"/>
</dbReference>
<dbReference type="Gene3D" id="1.20.1070.10">
    <property type="entry name" value="Rhodopsin 7-helix transmembrane proteins"/>
    <property type="match status" value="1"/>
</dbReference>
<dbReference type="InterPro" id="IPR000276">
    <property type="entry name" value="GPCR_Rhodpsn"/>
</dbReference>
<dbReference type="InterPro" id="IPR017452">
    <property type="entry name" value="GPCR_Rhodpsn_7TM"/>
</dbReference>
<dbReference type="InterPro" id="IPR000725">
    <property type="entry name" value="Olfact_rcpt"/>
</dbReference>
<dbReference type="PANTHER" id="PTHR48018">
    <property type="entry name" value="OLFACTORY RECEPTOR"/>
    <property type="match status" value="1"/>
</dbReference>
<dbReference type="Pfam" id="PF13853">
    <property type="entry name" value="7tm_4"/>
    <property type="match status" value="1"/>
</dbReference>
<dbReference type="PRINTS" id="PR00237">
    <property type="entry name" value="GPCRRHODOPSN"/>
</dbReference>
<dbReference type="PRINTS" id="PR00245">
    <property type="entry name" value="OLFACTORYR"/>
</dbReference>
<dbReference type="SUPFAM" id="SSF81321">
    <property type="entry name" value="Family A G protein-coupled receptor-like"/>
    <property type="match status" value="1"/>
</dbReference>
<dbReference type="PROSITE" id="PS00237">
    <property type="entry name" value="G_PROTEIN_RECEP_F1_1"/>
    <property type="match status" value="1"/>
</dbReference>
<dbReference type="PROSITE" id="PS50262">
    <property type="entry name" value="G_PROTEIN_RECEP_F1_2"/>
    <property type="match status" value="1"/>
</dbReference>
<proteinExistence type="evidence at transcript level"/>
<evidence type="ECO:0000255" key="1"/>
<evidence type="ECO:0000255" key="2">
    <source>
        <dbReference type="PROSITE-ProRule" id="PRU00521"/>
    </source>
</evidence>
<evidence type="ECO:0000305" key="3"/>
<feature type="chain" id="PRO_0000150610" description="Olfactory receptor 5P2">
    <location>
        <begin position="1"/>
        <end position="322"/>
    </location>
</feature>
<feature type="topological domain" description="Extracellular" evidence="1">
    <location>
        <begin position="1"/>
        <end position="28"/>
    </location>
</feature>
<feature type="transmembrane region" description="Helical; Name=1" evidence="1">
    <location>
        <begin position="29"/>
        <end position="42"/>
    </location>
</feature>
<feature type="topological domain" description="Cytoplasmic" evidence="1">
    <location>
        <begin position="43"/>
        <end position="50"/>
    </location>
</feature>
<feature type="transmembrane region" description="Helical; Name=2" evidence="1">
    <location>
        <begin position="51"/>
        <end position="71"/>
    </location>
</feature>
<feature type="topological domain" description="Extracellular" evidence="1">
    <location>
        <begin position="72"/>
        <end position="95"/>
    </location>
</feature>
<feature type="transmembrane region" description="Helical; Name=3" evidence="1">
    <location>
        <begin position="96"/>
        <end position="116"/>
    </location>
</feature>
<feature type="topological domain" description="Cytoplasmic" evidence="1">
    <location>
        <begin position="117"/>
        <end position="135"/>
    </location>
</feature>
<feature type="transmembrane region" description="Helical; Name=4" evidence="1">
    <location>
        <begin position="136"/>
        <end position="156"/>
    </location>
</feature>
<feature type="topological domain" description="Extracellular" evidence="1">
    <location>
        <begin position="157"/>
        <end position="192"/>
    </location>
</feature>
<feature type="transmembrane region" description="Helical; Name=5" evidence="1">
    <location>
        <begin position="193"/>
        <end position="213"/>
    </location>
</feature>
<feature type="topological domain" description="Cytoplasmic" evidence="1">
    <location>
        <begin position="214"/>
        <end position="233"/>
    </location>
</feature>
<feature type="transmembrane region" description="Helical; Name=6" evidence="1">
    <location>
        <begin position="234"/>
        <end position="254"/>
    </location>
</feature>
<feature type="topological domain" description="Extracellular" evidence="1">
    <location>
        <begin position="255"/>
        <end position="267"/>
    </location>
</feature>
<feature type="transmembrane region" description="Helical; Name=7" evidence="1">
    <location>
        <begin position="268"/>
        <end position="288"/>
    </location>
</feature>
<feature type="topological domain" description="Cytoplasmic" evidence="1">
    <location>
        <begin position="289"/>
        <end position="322"/>
    </location>
</feature>
<feature type="glycosylation site" description="N-linked (GlcNAc...) asparagine" evidence="1">
    <location>
        <position position="8"/>
    </location>
</feature>
<feature type="glycosylation site" description="N-linked (GlcNAc...) asparagine" evidence="1">
    <location>
        <position position="259"/>
    </location>
</feature>
<feature type="disulfide bond" evidence="2">
    <location>
        <begin position="93"/>
        <end position="185"/>
    </location>
</feature>
<feature type="sequence variant" id="VAR_053203" description="In dbSNP:rs1482804.">
    <original>G</original>
    <variation>R</variation>
    <location>
        <position position="7"/>
    </location>
</feature>
<feature type="sequence variant" id="VAR_053204" description="In dbSNP:rs7949771.">
    <original>N</original>
    <variation>D</variation>
    <location>
        <position position="318"/>
    </location>
</feature>
<comment type="function">
    <text evidence="3">Odorant receptor (Potential). May be involved in taste perception.</text>
</comment>
<comment type="subcellular location">
    <subcellularLocation>
        <location>Cell membrane</location>
        <topology>Multi-pass membrane protein</topology>
    </subcellularLocation>
</comment>
<comment type="tissue specificity">
    <text>Expressed in the tongue.</text>
</comment>
<comment type="similarity">
    <text evidence="2">Belongs to the G-protein coupled receptor 1 family.</text>
</comment>
<comment type="online information" name="Human Olfactory Receptor Data Exploratorium (HORDE)">
    <link uri="http://genome.weizmann.ac.il/horde/card/index/symbol:OR5P2"/>
</comment>
<sequence length="322" mass="35786">MNSLKDGNHTALTGFILLGLTDDPILRVILFMIILSGNLSIIILIRISSQLHHPMYFFLSHLAFADMAYSSSVTPNMLVNFLVERNTVSYLGCAIQLGSAAFFATVECVLLAAMAYDRFVAICSPLLYSTKMSTQVSVQLLLVVYIAGFLIAVSYTTSFYFLLFCGPNQVNHFFCDFAPLLELSCSDISVSTVVLSFSSGSIIVVTVCVIAVCYIYILITILKMRSTEGHHKAFSTCTSHLTVVTLFYGTITFIYVMPNFSYSTDQNKVVSVLYTVVIPMLNPLIYSLRNKEIKGALKRELVRKILSHDACYFSRTSNNDIT</sequence>
<name>OR5P2_HUMAN</name>
<organism>
    <name type="scientific">Homo sapiens</name>
    <name type="common">Human</name>
    <dbReference type="NCBI Taxonomy" id="9606"/>
    <lineage>
        <taxon>Eukaryota</taxon>
        <taxon>Metazoa</taxon>
        <taxon>Chordata</taxon>
        <taxon>Craniata</taxon>
        <taxon>Vertebrata</taxon>
        <taxon>Euteleostomi</taxon>
        <taxon>Mammalia</taxon>
        <taxon>Eutheria</taxon>
        <taxon>Euarchontoglires</taxon>
        <taxon>Primates</taxon>
        <taxon>Haplorrhini</taxon>
        <taxon>Catarrhini</taxon>
        <taxon>Hominidae</taxon>
        <taxon>Homo</taxon>
    </lineage>
</organism>
<protein>
    <recommendedName>
        <fullName>Olfactory receptor 5P2</fullName>
    </recommendedName>
    <alternativeName>
        <fullName>Olfactory receptor-like protein JCG3</fullName>
    </alternativeName>
</protein>